<feature type="chain" id="PRO_0000443465" description="5'-hydroxyaverantin dehydrogenase">
    <location>
        <begin position="1"/>
        <end position="306"/>
    </location>
</feature>
<feature type="active site" description="Proton donor" evidence="2">
    <location>
        <position position="173"/>
    </location>
</feature>
<feature type="active site" description="Proton acceptor" evidence="4">
    <location>
        <position position="187"/>
    </location>
</feature>
<feature type="active site" description="Lowers pKa of active site Tyr" evidence="2">
    <location>
        <position position="191"/>
    </location>
</feature>
<feature type="binding site" evidence="1">
    <location>
        <position position="25"/>
    </location>
    <ligand>
        <name>NADP(+)</name>
        <dbReference type="ChEBI" id="CHEBI:58349"/>
    </ligand>
</feature>
<feature type="binding site" evidence="1">
    <location>
        <position position="27"/>
    </location>
    <ligand>
        <name>NADP(+)</name>
        <dbReference type="ChEBI" id="CHEBI:58349"/>
    </ligand>
</feature>
<feature type="binding site" evidence="1">
    <location>
        <position position="48"/>
    </location>
    <ligand>
        <name>NADP(+)</name>
        <dbReference type="ChEBI" id="CHEBI:58349"/>
    </ligand>
</feature>
<feature type="binding site" evidence="1">
    <location>
        <position position="52"/>
    </location>
    <ligand>
        <name>NADP(+)</name>
        <dbReference type="ChEBI" id="CHEBI:58349"/>
    </ligand>
</feature>
<feature type="binding site" evidence="1">
    <location>
        <position position="73"/>
    </location>
    <ligand>
        <name>NADP(+)</name>
        <dbReference type="ChEBI" id="CHEBI:58349"/>
    </ligand>
</feature>
<feature type="binding site" evidence="2">
    <location>
        <position position="187"/>
    </location>
    <ligand>
        <name>NADP(+)</name>
        <dbReference type="ChEBI" id="CHEBI:58349"/>
    </ligand>
</feature>
<feature type="binding site" evidence="2">
    <location>
        <position position="191"/>
    </location>
    <ligand>
        <name>NADP(+)</name>
        <dbReference type="ChEBI" id="CHEBI:58349"/>
    </ligand>
</feature>
<feature type="binding site" evidence="2">
    <location>
        <position position="220"/>
    </location>
    <ligand>
        <name>NADP(+)</name>
        <dbReference type="ChEBI" id="CHEBI:58349"/>
    </ligand>
</feature>
<feature type="binding site" evidence="1">
    <location>
        <position position="222"/>
    </location>
    <ligand>
        <name>NADP(+)</name>
        <dbReference type="ChEBI" id="CHEBI:58349"/>
    </ligand>
</feature>
<comment type="function">
    <text evidence="3 5 6 9 12 13 14">5'-hydroxyaverantin dehydrogenase; part of the fragmented gene cluster that mediates the biosynthesis of dothistromin (DOTH), a polyketide toxin very similar in structure to the aflatoxin precursor, versicolorin B (PubMed:12039746, PubMed:17683963, PubMed:22069571, PubMed:23207690, PubMed:23448391). The first step of the pathway is the conversion of acetate to norsolorinic acid (NOR) and requires the fatty acid synthase subunits hexA and hexB, as well as the polyketide synthase pksA (PubMed:16649078, PubMed:23207690). PksA combines a hexanoyl starter unit and 7 malonyl-CoA extender units to synthesize the precursor NOR (By similarity). The hexanoyl starter unit is provided to the acyl-carrier protein (ACP) domain by the fungal fatty acid synthase hexA/hexB (By similarity). The second step is the conversion of NOR to averantin (AVN) and requires the norsolorinic acid ketoreductase nor1, which catalyzes the dehydration of norsolorinic acid to form (1'S)-averantin (PubMed:23207690). The cytochrome P450 monooxygenase avnA then catalyzes the hydroxylation of AVN to 5'hydroxyaverantin (HAVN) (PubMed:23207690). The next step is performed by adhA that transforms HAVN to averufin (AVF) (PubMed:23207690). Averufin might then be converted to hydroxyversicolorone by cypX and avfA (PubMed:23207690). Hydroxyversicolorone is further converted versiconal hemiacetal acetate (VHA) by moxY (PubMed:23207690). VHA is then the substrate for the versiconal hemiacetal acetate esterase est1 to yield versiconal (VAL) (PubMed:23207690). Versicolorin B synthase vbsA then converts VAL to versicolorin B (VERB) by closing the bisfuran ring (PubMed:16649078, PubMed:23207690). Then, the activity of the versicolorin B desaturase verB leads to versicolorin A (VERA) (PubMed:23207690). DotB, a predicted chloroperoxidase, may perform epoxidation of the A-ring of VERA (PubMed:23207690). Alternatively, a cytochrome P450, such as cypX or avnA could catalyze this step (PubMed:23207690). It is also possible that another, uncharacterized, cytochrome P450 enzyme is responsible for this step (PubMed:23207690). Opening of the epoxide could potentially be achieved by the epoxide hydrolase epoA (PubMed:23207690). However, epoA seems not to be required for DOTH biosynthesis, but other epoxide hydrolases may have the ability to complement this hydrolysis (PubMed:23207690). Alternatively, opening of the epoxide ring could be achieved non-enzymatically (PubMed:23207690). The next step is the deoxygenation of ring A to yield the 5,8-dihydroxyanthraquinone which is most likely catalyzed by the NADPH dehydrogenase encoded by ver1 (PubMed:23207690). The last stages of DOTH biosynthesis are proposed to involve hydroxylation of the bisfuran (PubMed:23207690). OrdB and norB might have oxidative roles here (PubMed:23207690). An alternative possibility is that cytochrome P450 monoogenases such as avnA and cypX might perform these steps in addition to previously proposed steps (PubMed:23207690).</text>
</comment>
<comment type="catalytic activity">
    <reaction evidence="3">
        <text>(1'S,5'S)-5'-hydroxyaverantin + NAD(+) = (S)-5'-oxoaverantin + NADH + H(+)</text>
        <dbReference type="Rhea" id="RHEA:35475"/>
        <dbReference type="ChEBI" id="CHEBI:15378"/>
        <dbReference type="ChEBI" id="CHEBI:57540"/>
        <dbReference type="ChEBI" id="CHEBI:57945"/>
        <dbReference type="ChEBI" id="CHEBI:77900"/>
        <dbReference type="ChEBI" id="CHEBI:77933"/>
        <dbReference type="EC" id="1.1.1.352"/>
    </reaction>
</comment>
<comment type="catalytic activity">
    <reaction evidence="3">
        <text>(1'S,5'R)-5'-hydroxyaverantin + NAD(+) = (S)-5'-oxoaverantin + NADH + 2 H(+)</text>
        <dbReference type="Rhea" id="RHEA:35479"/>
        <dbReference type="ChEBI" id="CHEBI:15378"/>
        <dbReference type="ChEBI" id="CHEBI:57540"/>
        <dbReference type="ChEBI" id="CHEBI:57945"/>
        <dbReference type="ChEBI" id="CHEBI:71536"/>
        <dbReference type="ChEBI" id="CHEBI:77933"/>
        <dbReference type="EC" id="1.1.1.352"/>
    </reaction>
</comment>
<comment type="pathway">
    <text evidence="9 13">Mycotoxin biosynthesis.</text>
</comment>
<comment type="subunit">
    <text evidence="3">Homodimer.</text>
</comment>
<comment type="subcellular location">
    <subcellularLocation>
        <location evidence="3">Cytoplasm</location>
        <location evidence="3">Cytosol</location>
    </subcellularLocation>
</comment>
<comment type="induction">
    <text evidence="7 8">Expression is positively regulated by the dothistromin-specific transcription factors aflR and aflJ (PubMed:23207690, PubMed:25986547).</text>
</comment>
<comment type="similarity">
    <text evidence="11">Belongs to the short-chain dehydrogenases/reductases (SDR) family.</text>
</comment>
<dbReference type="EC" id="1.1.1.352" evidence="3"/>
<dbReference type="EMBL" id="KB446546">
    <property type="protein sequence ID" value="EME39085.1"/>
    <property type="molecule type" value="Genomic_DNA"/>
</dbReference>
<dbReference type="SMR" id="M2YJK1"/>
<dbReference type="STRING" id="675120.M2YJK1"/>
<dbReference type="EnsemblFungi" id="EME39085">
    <property type="protein sequence ID" value="EME39085"/>
    <property type="gene ID" value="DOTSEDRAFT_48495"/>
</dbReference>
<dbReference type="eggNOG" id="KOG0725">
    <property type="taxonomic scope" value="Eukaryota"/>
</dbReference>
<dbReference type="HOGENOM" id="CLU_010194_13_3_1"/>
<dbReference type="OMA" id="AVYNTCY"/>
<dbReference type="OrthoDB" id="5371740at2759"/>
<dbReference type="Proteomes" id="UP000016933">
    <property type="component" value="Unassembled WGS sequence"/>
</dbReference>
<dbReference type="GO" id="GO:0005829">
    <property type="term" value="C:cytosol"/>
    <property type="evidence" value="ECO:0007669"/>
    <property type="project" value="UniProtKB-SubCell"/>
</dbReference>
<dbReference type="GO" id="GO:0140396">
    <property type="term" value="F:5'-hydroxyaverantin dehydrogenase activity"/>
    <property type="evidence" value="ECO:0007669"/>
    <property type="project" value="UniProtKB-EC"/>
</dbReference>
<dbReference type="Gene3D" id="3.40.50.720">
    <property type="entry name" value="NAD(P)-binding Rossmann-like Domain"/>
    <property type="match status" value="1"/>
</dbReference>
<dbReference type="InterPro" id="IPR036291">
    <property type="entry name" value="NAD(P)-bd_dom_sf"/>
</dbReference>
<dbReference type="InterPro" id="IPR020904">
    <property type="entry name" value="Sc_DH/Rdtase_CS"/>
</dbReference>
<dbReference type="InterPro" id="IPR002347">
    <property type="entry name" value="SDR_fam"/>
</dbReference>
<dbReference type="PANTHER" id="PTHR44229">
    <property type="entry name" value="15-HYDROXYPROSTAGLANDIN DEHYDROGENASE [NAD(+)]"/>
    <property type="match status" value="1"/>
</dbReference>
<dbReference type="PANTHER" id="PTHR44229:SF4">
    <property type="entry name" value="15-HYDROXYPROSTAGLANDIN DEHYDROGENASE [NAD(+)]"/>
    <property type="match status" value="1"/>
</dbReference>
<dbReference type="Pfam" id="PF00106">
    <property type="entry name" value="adh_short"/>
    <property type="match status" value="1"/>
</dbReference>
<dbReference type="PRINTS" id="PR00081">
    <property type="entry name" value="GDHRDH"/>
</dbReference>
<dbReference type="SUPFAM" id="SSF51735">
    <property type="entry name" value="NAD(P)-binding Rossmann-fold domains"/>
    <property type="match status" value="1"/>
</dbReference>
<dbReference type="PROSITE" id="PS00061">
    <property type="entry name" value="ADH_SHORT"/>
    <property type="match status" value="1"/>
</dbReference>
<accession>M2YJK1</accession>
<keyword id="KW-0963">Cytoplasm</keyword>
<keyword id="KW-0521">NADP</keyword>
<keyword id="KW-0560">Oxidoreductase</keyword>
<keyword id="KW-1185">Reference proteome</keyword>
<evidence type="ECO:0000250" key="1">
    <source>
        <dbReference type="UniProtKB" id="L0E2Z4"/>
    </source>
</evidence>
<evidence type="ECO:0000250" key="2">
    <source>
        <dbReference type="UniProtKB" id="O93868"/>
    </source>
</evidence>
<evidence type="ECO:0000250" key="3">
    <source>
        <dbReference type="UniProtKB" id="P87017"/>
    </source>
</evidence>
<evidence type="ECO:0000255" key="4">
    <source>
        <dbReference type="PROSITE-ProRule" id="PRU10001"/>
    </source>
</evidence>
<evidence type="ECO:0000269" key="5">
    <source>
    </source>
</evidence>
<evidence type="ECO:0000269" key="6">
    <source>
    </source>
</evidence>
<evidence type="ECO:0000269" key="7">
    <source>
    </source>
</evidence>
<evidence type="ECO:0000269" key="8">
    <source>
    </source>
</evidence>
<evidence type="ECO:0000303" key="9">
    <source>
    </source>
</evidence>
<evidence type="ECO:0000303" key="10">
    <source>
    </source>
</evidence>
<evidence type="ECO:0000305" key="11"/>
<evidence type="ECO:0000305" key="12">
    <source>
    </source>
</evidence>
<evidence type="ECO:0000305" key="13">
    <source>
    </source>
</evidence>
<evidence type="ECO:0000305" key="14">
    <source>
    </source>
</evidence>
<proteinExistence type="evidence at transcript level"/>
<reference key="1">
    <citation type="journal article" date="2012" name="PLoS Genet.">
        <title>The genomes of the fungal plant pathogens Cladosporium fulvum and Dothistroma septosporum reveal adaptation to different hosts and lifestyles but also signatures of common ancestry.</title>
        <authorList>
            <person name="de Wit P.J.G.M."/>
            <person name="van der Burgt A."/>
            <person name="Oekmen B."/>
            <person name="Stergiopoulos I."/>
            <person name="Abd-Elsalam K.A."/>
            <person name="Aerts A.L."/>
            <person name="Bahkali A.H."/>
            <person name="Beenen H.G."/>
            <person name="Chettri P."/>
            <person name="Cox M.P."/>
            <person name="Datema E."/>
            <person name="de Vries R.P."/>
            <person name="Dhillon B."/>
            <person name="Ganley A.R."/>
            <person name="Griffiths S.A."/>
            <person name="Guo Y."/>
            <person name="Hamelin R.C."/>
            <person name="Henrissat B."/>
            <person name="Kabir M.S."/>
            <person name="Jashni M.K."/>
            <person name="Kema G."/>
            <person name="Klaubauf S."/>
            <person name="Lapidus A."/>
            <person name="Levasseur A."/>
            <person name="Lindquist E."/>
            <person name="Mehrabi R."/>
            <person name="Ohm R.A."/>
            <person name="Owen T.J."/>
            <person name="Salamov A."/>
            <person name="Schwelm A."/>
            <person name="Schijlen E."/>
            <person name="Sun H."/>
            <person name="van den Burg H.A."/>
            <person name="van Ham R.C.H.J."/>
            <person name="Zhang S."/>
            <person name="Goodwin S.B."/>
            <person name="Grigoriev I.V."/>
            <person name="Collemare J."/>
            <person name="Bradshaw R.E."/>
        </authorList>
    </citation>
    <scope>NUCLEOTIDE SEQUENCE [LARGE SCALE GENOMIC DNA]</scope>
    <source>
        <strain>NZE10 / CBS 128990</strain>
    </source>
</reference>
<reference key="2">
    <citation type="journal article" date="2012" name="PLoS Pathog.">
        <title>Diverse lifestyles and strategies of plant pathogenesis encoded in the genomes of eighteen Dothideomycetes fungi.</title>
        <authorList>
            <person name="Ohm R.A."/>
            <person name="Feau N."/>
            <person name="Henrissat B."/>
            <person name="Schoch C.L."/>
            <person name="Horwitz B.A."/>
            <person name="Barry K.W."/>
            <person name="Condon B.J."/>
            <person name="Copeland A.C."/>
            <person name="Dhillon B."/>
            <person name="Glaser F."/>
            <person name="Hesse C.N."/>
            <person name="Kosti I."/>
            <person name="LaButti K."/>
            <person name="Lindquist E.A."/>
            <person name="Lucas S."/>
            <person name="Salamov A.A."/>
            <person name="Bradshaw R.E."/>
            <person name="Ciuffetti L."/>
            <person name="Hamelin R.C."/>
            <person name="Kema G.H.J."/>
            <person name="Lawrence C."/>
            <person name="Scott J.A."/>
            <person name="Spatafora J.W."/>
            <person name="Turgeon B.G."/>
            <person name="de Wit P.J.G.M."/>
            <person name="Zhong S."/>
            <person name="Goodwin S.B."/>
            <person name="Grigoriev I.V."/>
        </authorList>
    </citation>
    <scope>NUCLEOTIDE SEQUENCE [LARGE SCALE GENOMIC DNA]</scope>
    <source>
        <strain>NZE10 / CBS 128990</strain>
    </source>
</reference>
<reference key="3">
    <citation type="journal article" date="2002" name="Appl. Environ. Microbiol.">
        <title>Dothistroma pini, a forest pathogen, contains homologs of aflatoxin biosynthetic pathway genes.</title>
        <authorList>
            <person name="Bradshaw R.E."/>
            <person name="Bhatnagar D."/>
            <person name="Ganley R.J."/>
            <person name="Gillman C.J."/>
            <person name="Monahan B.J."/>
            <person name="Seconi J.M."/>
        </authorList>
    </citation>
    <scope>FUNCTION</scope>
</reference>
<reference key="4">
    <citation type="journal article" date="2006" name="Mycopathologia">
        <title>A polyketide synthase gene required for biosynthesis of the aflatoxin-like toxin, dothistromin.</title>
        <authorList>
            <person name="Bradshaw R.E."/>
            <person name="Jin H."/>
            <person name="Morgan B.S."/>
            <person name="Schwelm A."/>
            <person name="Teddy O.R."/>
            <person name="Young C.A."/>
            <person name="Zhang S."/>
        </authorList>
    </citation>
    <scope>FUNCTION</scope>
</reference>
<reference key="5">
    <citation type="journal article" date="2007" name="Fungal Genet. Biol.">
        <title>A fragmented aflatoxin-like gene cluster in the forest pathogen Dothistroma septosporum.</title>
        <authorList>
            <person name="Zhang S."/>
            <person name="Schwelm A."/>
            <person name="Jin H."/>
            <person name="Collins L.J."/>
            <person name="Bradshaw R.E."/>
        </authorList>
    </citation>
    <scope>FUNCTION</scope>
</reference>
<reference key="6">
    <citation type="journal article" date="2010" name="Toxins">
        <title>Genetics of dothistromin biosynthesis of Dothistroma septosporum: an update.</title>
        <authorList>
            <person name="Schwelm A."/>
            <person name="Bradshaw R.E."/>
        </authorList>
    </citation>
    <scope>REVIEW ON FUNCTION</scope>
    <scope>PATHWAY</scope>
</reference>
<reference key="7">
    <citation type="journal article" date="2013" name="Fungal Genet. Biol.">
        <title>Dothistromin genes at multiple separate loci are regulated by AflR.</title>
        <authorList>
            <person name="Chettri P."/>
            <person name="Ehrlich K.C."/>
            <person name="Cary J.W."/>
            <person name="Collemare J."/>
            <person name="Cox M.P."/>
            <person name="Griffiths S.A."/>
            <person name="Olson M.A."/>
            <person name="de Wit P.J."/>
            <person name="Bradshaw R.E."/>
        </authorList>
    </citation>
    <scope>FUNCTION</scope>
    <scope>INDUCTION</scope>
    <scope>PATHWAY</scope>
</reference>
<reference key="8">
    <citation type="journal article" date="2013" name="New Phytol.">
        <title>Fragmentation of an aflatoxin-like gene cluster in a forest pathogen.</title>
        <authorList>
            <person name="Bradshaw R.E."/>
            <person name="Slot J.C."/>
            <person name="Moore G.G."/>
            <person name="Chettri P."/>
            <person name="de Wit P.J."/>
            <person name="Ehrlich K.C."/>
            <person name="Ganley A.R."/>
            <person name="Olson M.A."/>
            <person name="Rokas A."/>
            <person name="Carbone I."/>
            <person name="Cox M.P."/>
        </authorList>
    </citation>
    <scope>FUNCTION</scope>
</reference>
<reference key="9">
    <citation type="journal article" date="2015" name="Fungal Biol.">
        <title>Regulation of the aflatoxin-like toxin dothistromin by AflJ.</title>
        <authorList>
            <person name="Chettri P."/>
            <person name="Ehrlich K.C."/>
            <person name="Bradshaw R.E."/>
        </authorList>
    </citation>
    <scope>INDUCTION</scope>
</reference>
<gene>
    <name evidence="10" type="primary">adhA</name>
    <name type="ORF">DOTSEDRAFT_48495</name>
</gene>
<sequence length="306" mass="32944">MEALNTNVDLAGLEGRSVLVTGGASGIGLATAKAWAAAGAYVTLADIQPIEKGEKIASDLSHNGQHVNYTFCDVTSWESQLEAFRSAVKFSPRQTLDIVATFAGTAFAPGNEVDHVLFAGEPSLDAELPAPNTKNIEVNLTGVYYSSWLALYFFRLKPSDSSEPGDKSLILVSSIGGYMDSPKASTYPASKFGVRGLFRSTRARTIDIGVRCNLLAPWFVDTPLIAPVKNAMKARGIEMSKVLAFATMEDCVQAASFCAVNKELHGRALAIQPEGTFDLKDDVEDGWAGDQLRPIMKRRREAGFDA</sequence>
<name>ADHA_DOTSN</name>
<organism>
    <name type="scientific">Dothistroma septosporum (strain NZE10 / CBS 128990)</name>
    <name type="common">Red band needle blight fungus</name>
    <name type="synonym">Mycosphaerella pini</name>
    <dbReference type="NCBI Taxonomy" id="675120"/>
    <lineage>
        <taxon>Eukaryota</taxon>
        <taxon>Fungi</taxon>
        <taxon>Dikarya</taxon>
        <taxon>Ascomycota</taxon>
        <taxon>Pezizomycotina</taxon>
        <taxon>Dothideomycetes</taxon>
        <taxon>Dothideomycetidae</taxon>
        <taxon>Mycosphaerellales</taxon>
        <taxon>Mycosphaerellaceae</taxon>
        <taxon>Dothistroma</taxon>
    </lineage>
</organism>
<protein>
    <recommendedName>
        <fullName evidence="3">5'-hydroxyaverantin dehydrogenase</fullName>
        <shortName evidence="3">HAVN dehydrogenase</shortName>
        <ecNumber evidence="3">1.1.1.352</ecNumber>
    </recommendedName>
    <alternativeName>
        <fullName evidence="10">Dothistromin biosynthesis protein adhA</fullName>
    </alternativeName>
</protein>